<evidence type="ECO:0000255" key="1">
    <source>
        <dbReference type="PROSITE-ProRule" id="PRU00798"/>
    </source>
</evidence>
<evidence type="ECO:0000269" key="2">
    <source>
    </source>
</evidence>
<accession>P83578</accession>
<reference key="1">
    <citation type="journal article" date="2004" name="Eur. J. Biochem.">
        <title>A Kazal prolyl endopeptidase inhibitor isolated from the skin of Phyllomedusa sauvagii.</title>
        <authorList>
            <person name="Gebhard L.G."/>
            <person name="Carrizo F.U."/>
            <person name="Stern A.L."/>
            <person name="Burgardt N.I."/>
            <person name="Faivovich J."/>
            <person name="Lavilla E."/>
            <person name="Ermacora M.R."/>
        </authorList>
    </citation>
    <scope>PROTEIN SEQUENCE</scope>
    <scope>FUNCTION</scope>
    <scope>SUBUNIT</scope>
    <scope>SUBCELLULAR LOCATION</scope>
    <scope>MASS SPECTROMETRY</scope>
    <scope>MUTAGENESIS OF 11-GLY--PRO-16</scope>
    <scope>CIRCULAR DICHROISM ANALYSIS</scope>
    <source>
        <tissue>Skin</tissue>
    </source>
</reference>
<proteinExistence type="evidence at protein level"/>
<organism>
    <name type="scientific">Phyllomedusa sauvagei</name>
    <name type="common">Sauvage's leaf frog</name>
    <dbReference type="NCBI Taxonomy" id="8395"/>
    <lineage>
        <taxon>Eukaryota</taxon>
        <taxon>Metazoa</taxon>
        <taxon>Chordata</taxon>
        <taxon>Craniata</taxon>
        <taxon>Vertebrata</taxon>
        <taxon>Euteleostomi</taxon>
        <taxon>Amphibia</taxon>
        <taxon>Batrachia</taxon>
        <taxon>Anura</taxon>
        <taxon>Neobatrachia</taxon>
        <taxon>Hyloidea</taxon>
        <taxon>Hylidae</taxon>
        <taxon>Phyllomedusinae</taxon>
        <taxon>Phyllomedusa</taxon>
    </lineage>
</organism>
<keyword id="KW-0044">Antibiotic</keyword>
<keyword id="KW-0929">Antimicrobial</keyword>
<keyword id="KW-0903">Direct protein sequencing</keyword>
<keyword id="KW-1015">Disulfide bond</keyword>
<keyword id="KW-0646">Protease inhibitor</keyword>
<keyword id="KW-0964">Secreted</keyword>
<name>IKP1_PHYSA</name>
<feature type="chain" id="PRO_0000073043" description="Proteinase inhibitor PSKP-1">
    <location>
        <begin position="1"/>
        <end position="58"/>
    </location>
</feature>
<feature type="domain" description="Kazal-like" evidence="1">
    <location>
        <begin position="1"/>
        <end position="58"/>
    </location>
</feature>
<feature type="disulfide bond" evidence="1">
    <location>
        <begin position="6"/>
        <end position="36"/>
    </location>
</feature>
<feature type="disulfide bond" evidence="1">
    <location>
        <begin position="14"/>
        <end position="33"/>
    </location>
</feature>
<feature type="disulfide bond" evidence="1">
    <location>
        <begin position="22"/>
        <end position="58"/>
    </location>
</feature>
<feature type="mutagenesis site" description="Significant inhibitory activity against trypsin." evidence="2">
    <original>GKKCPP</original>
    <variation>LPGCPK</variation>
    <location>
        <begin position="11"/>
        <end position="16"/>
    </location>
</feature>
<comment type="function">
    <text evidence="2">Has antibacterial activity against Gram-negative bacterium E.coli ATCC 11229. Shows hemagglutinating activity. Inhibits prolyl endopeptidase, but not trypsin, chymotrypsin, V8 protease and proteinase K. May have a role in mucosal defense against microbes by interacting directly with their membranes.</text>
</comment>
<comment type="subunit">
    <text evidence="2">Monomer.</text>
</comment>
<comment type="subcellular location">
    <subcellularLocation>
        <location evidence="2">Secreted</location>
    </subcellularLocation>
</comment>
<comment type="tissue specificity">
    <text>Skin.</text>
</comment>
<comment type="mass spectrometry" mass="7332.0" error="0.7" method="Electrospray" evidence="2"/>
<sequence length="58" mass="6702">VIEPKCYKYEGKKCPPDINPVCGTDKRTYYNECALCVFIRQSTKKADKAIKIKKWGKC</sequence>
<dbReference type="SMR" id="P83578"/>
<dbReference type="MEROPS" id="I01.035"/>
<dbReference type="GO" id="GO:0005576">
    <property type="term" value="C:extracellular region"/>
    <property type="evidence" value="ECO:0000314"/>
    <property type="project" value="UniProtKB"/>
</dbReference>
<dbReference type="GO" id="GO:0004866">
    <property type="term" value="F:endopeptidase inhibitor activity"/>
    <property type="evidence" value="ECO:0000314"/>
    <property type="project" value="UniProtKB"/>
</dbReference>
<dbReference type="GO" id="GO:0050829">
    <property type="term" value="P:defense response to Gram-negative bacterium"/>
    <property type="evidence" value="ECO:0000314"/>
    <property type="project" value="UniProtKB"/>
</dbReference>
<dbReference type="FunFam" id="3.30.60.30:FF:000147">
    <property type="entry name" value="Proteinase inhibitor PSKP-1"/>
    <property type="match status" value="1"/>
</dbReference>
<dbReference type="Gene3D" id="3.30.60.30">
    <property type="match status" value="1"/>
</dbReference>
<dbReference type="InterPro" id="IPR002350">
    <property type="entry name" value="Kazal_dom"/>
</dbReference>
<dbReference type="InterPro" id="IPR036058">
    <property type="entry name" value="Kazal_dom_sf"/>
</dbReference>
<dbReference type="PANTHER" id="PTHR21312:SF28">
    <property type="entry name" value="OVOINHIBITOR-RELATED"/>
    <property type="match status" value="1"/>
</dbReference>
<dbReference type="PANTHER" id="PTHR21312">
    <property type="entry name" value="SERINE PROTEASE INHIBITOR"/>
    <property type="match status" value="1"/>
</dbReference>
<dbReference type="Pfam" id="PF00050">
    <property type="entry name" value="Kazal_1"/>
    <property type="match status" value="1"/>
</dbReference>
<dbReference type="SMART" id="SM00280">
    <property type="entry name" value="KAZAL"/>
    <property type="match status" value="1"/>
</dbReference>
<dbReference type="SUPFAM" id="SSF100895">
    <property type="entry name" value="Kazal-type serine protease inhibitors"/>
    <property type="match status" value="1"/>
</dbReference>
<dbReference type="PROSITE" id="PS00282">
    <property type="entry name" value="KAZAL_1"/>
    <property type="match status" value="1"/>
</dbReference>
<dbReference type="PROSITE" id="PS51465">
    <property type="entry name" value="KAZAL_2"/>
    <property type="match status" value="1"/>
</dbReference>
<protein>
    <recommendedName>
        <fullName>Proteinase inhibitor PSKP-1</fullName>
    </recommendedName>
</protein>